<gene>
    <name evidence="1" type="primary">cdr</name>
    <name type="ordered locus">SaurJH9_0970</name>
</gene>
<evidence type="ECO:0000255" key="1">
    <source>
        <dbReference type="HAMAP-Rule" id="MF_01608"/>
    </source>
</evidence>
<sequence length="438" mass="49285">MPKIVVVGAVAGGATCASQIRRLDKESDIIIFEKDRDMSFANCALPYVIGEVVEDRKYALVYTPEKFYDRKQITVKTYHEVIAINDERQTVTVLNRKTNEQFEESYDKLILSPGASANSLGFESDITFTLRNLEDTDAIDQFIKANQVDKVLVIGAGYVSLEVLENLYERGLHPTLIHRSDKINKLMDADMNQPILDELDKREIPYRLNEEIDAINGNEITFKSGKVEHYDMIIEGVGTHPNSKLIESSNIKLDRKGFIPVNDKFETNVPNIYAIGDIATSHYRHVDLPASVPLAWGAHRAASIVAEQIAGNDTIEFKGFLGNNIVKFFDYTFASVGVKPNELKQFDYKMVEVTQGAHANYYPGNSPLHLRVYYDTSNRQILRAAAVGKEGADKRIDVLSMAMMNQLTVDELTEFEVAYAPPYSHPKDLINMIGYKAK</sequence>
<comment type="function">
    <text evidence="1">Catalyzes specifically the NADPH-dependent reduction of coenzyme A disulfide.</text>
</comment>
<comment type="catalytic activity">
    <reaction evidence="1">
        <text>NADP(+) + 2 CoA = CoA-disulfide + NADPH + H(+)</text>
        <dbReference type="Rhea" id="RHEA:14705"/>
        <dbReference type="ChEBI" id="CHEBI:15378"/>
        <dbReference type="ChEBI" id="CHEBI:57287"/>
        <dbReference type="ChEBI" id="CHEBI:57783"/>
        <dbReference type="ChEBI" id="CHEBI:58349"/>
        <dbReference type="ChEBI" id="CHEBI:62209"/>
        <dbReference type="EC" id="1.8.1.14"/>
    </reaction>
</comment>
<comment type="cofactor">
    <cofactor evidence="1">
        <name>FAD</name>
        <dbReference type="ChEBI" id="CHEBI:57692"/>
    </cofactor>
    <text evidence="1">Binds 1 FAD per subunit.</text>
</comment>
<comment type="subunit">
    <text evidence="1">Homodimer.</text>
</comment>
<comment type="domain">
    <text evidence="1">Contains 2 FAD binding domains and a single NADPH binding domain.</text>
</comment>
<comment type="miscellaneous">
    <text evidence="1">Reduction of disulfides occurs by a thiol-disulfide exchange reaction, but involves only a single catalytic cysteine residue that forms a stable mixed disulfide with CoA during catalysis.</text>
</comment>
<comment type="similarity">
    <text evidence="1">Belongs to the class-III pyridine nucleotide-disulfide oxidoreductase family.</text>
</comment>
<organism>
    <name type="scientific">Staphylococcus aureus (strain JH9)</name>
    <dbReference type="NCBI Taxonomy" id="359786"/>
    <lineage>
        <taxon>Bacteria</taxon>
        <taxon>Bacillati</taxon>
        <taxon>Bacillota</taxon>
        <taxon>Bacilli</taxon>
        <taxon>Bacillales</taxon>
        <taxon>Staphylococcaceae</taxon>
        <taxon>Staphylococcus</taxon>
    </lineage>
</organism>
<protein>
    <recommendedName>
        <fullName evidence="1">Coenzyme A disulfide reductase</fullName>
        <shortName evidence="1">CoA-disulfide reductase</shortName>
        <shortName evidence="1">CoADR</shortName>
        <ecNumber evidence="1">1.8.1.14</ecNumber>
    </recommendedName>
</protein>
<feature type="chain" id="PRO_1000088036" description="Coenzyme A disulfide reductase">
    <location>
        <begin position="1"/>
        <end position="438"/>
    </location>
</feature>
<feature type="active site" description="Nucleophile" evidence="1">
    <location>
        <position position="43"/>
    </location>
</feature>
<feature type="active site" description="Redox-active" evidence="1">
    <location>
        <position position="43"/>
    </location>
</feature>
<feature type="binding site" evidence="1">
    <location>
        <begin position="8"/>
        <end position="33"/>
    </location>
    <ligand>
        <name>FAD</name>
        <dbReference type="ChEBI" id="CHEBI:57692"/>
    </ligand>
</feature>
<feature type="binding site" evidence="1">
    <location>
        <position position="15"/>
    </location>
    <ligand>
        <name>substrate</name>
    </ligand>
</feature>
<feature type="binding site" evidence="1">
    <location>
        <position position="19"/>
    </location>
    <ligand>
        <name>substrate</name>
    </ligand>
</feature>
<feature type="binding site" evidence="1">
    <location>
        <position position="22"/>
    </location>
    <ligand>
        <name>substrate</name>
    </ligand>
</feature>
<feature type="binding site" evidence="1">
    <location>
        <position position="39"/>
    </location>
    <ligand>
        <name>substrate</name>
    </ligand>
</feature>
<feature type="binding site" evidence="1">
    <location>
        <position position="42"/>
    </location>
    <ligand>
        <name>substrate</name>
    </ligand>
</feature>
<feature type="binding site" evidence="1">
    <location>
        <position position="71"/>
    </location>
    <ligand>
        <name>substrate</name>
    </ligand>
</feature>
<feature type="binding site" evidence="1">
    <location>
        <begin position="151"/>
        <end position="166"/>
    </location>
    <ligand>
        <name>NADP(+)</name>
        <dbReference type="ChEBI" id="CHEBI:58349"/>
    </ligand>
</feature>
<feature type="binding site" evidence="1">
    <location>
        <begin position="267"/>
        <end position="277"/>
    </location>
    <ligand>
        <name>FAD</name>
        <dbReference type="ChEBI" id="CHEBI:57692"/>
    </ligand>
</feature>
<feature type="binding site" evidence="1">
    <location>
        <position position="299"/>
    </location>
    <ligand>
        <name>substrate</name>
    </ligand>
</feature>
<feature type="binding site" evidence="1">
    <location>
        <position position="419"/>
    </location>
    <ligand>
        <name>FAD</name>
        <dbReference type="ChEBI" id="CHEBI:57692"/>
    </ligand>
</feature>
<feature type="binding site" evidence="1">
    <location>
        <position position="427"/>
    </location>
    <ligand>
        <name>substrate</name>
    </ligand>
</feature>
<proteinExistence type="inferred from homology"/>
<accession>A5IRE8</accession>
<dbReference type="EC" id="1.8.1.14" evidence="1"/>
<dbReference type="EMBL" id="CP000703">
    <property type="protein sequence ID" value="ABQ48771.1"/>
    <property type="molecule type" value="Genomic_DNA"/>
</dbReference>
<dbReference type="RefSeq" id="WP_001124517.1">
    <property type="nucleotide sequence ID" value="NC_009487.1"/>
</dbReference>
<dbReference type="SMR" id="A5IRE8"/>
<dbReference type="KEGG" id="saj:SaurJH9_0970"/>
<dbReference type="HOGENOM" id="CLU_003291_1_3_9"/>
<dbReference type="GO" id="GO:0050451">
    <property type="term" value="F:CoA-disulfide reductase (NADPH) activity"/>
    <property type="evidence" value="ECO:0007669"/>
    <property type="project" value="UniProtKB-UniRule"/>
</dbReference>
<dbReference type="GO" id="GO:0050660">
    <property type="term" value="F:flavin adenine dinucleotide binding"/>
    <property type="evidence" value="ECO:0007669"/>
    <property type="project" value="UniProtKB-UniRule"/>
</dbReference>
<dbReference type="GO" id="GO:0050661">
    <property type="term" value="F:NADP binding"/>
    <property type="evidence" value="ECO:0007669"/>
    <property type="project" value="UniProtKB-UniRule"/>
</dbReference>
<dbReference type="GO" id="GO:0003756">
    <property type="term" value="F:protein disulfide isomerase activity"/>
    <property type="evidence" value="ECO:0007669"/>
    <property type="project" value="UniProtKB-UniRule"/>
</dbReference>
<dbReference type="Gene3D" id="3.30.390.30">
    <property type="match status" value="1"/>
</dbReference>
<dbReference type="Gene3D" id="3.50.50.60">
    <property type="entry name" value="FAD/NAD(P)-binding domain"/>
    <property type="match status" value="2"/>
</dbReference>
<dbReference type="HAMAP" id="MF_01608">
    <property type="entry name" value="CoA_diS_reduct"/>
    <property type="match status" value="1"/>
</dbReference>
<dbReference type="InterPro" id="IPR017758">
    <property type="entry name" value="CoA_disulphide_reductase"/>
</dbReference>
<dbReference type="InterPro" id="IPR023536">
    <property type="entry name" value="CoA_disulphide_reductase_staph"/>
</dbReference>
<dbReference type="InterPro" id="IPR050260">
    <property type="entry name" value="FAD-bd_OxRdtase"/>
</dbReference>
<dbReference type="InterPro" id="IPR036188">
    <property type="entry name" value="FAD/NAD-bd_sf"/>
</dbReference>
<dbReference type="InterPro" id="IPR023753">
    <property type="entry name" value="FAD/NAD-binding_dom"/>
</dbReference>
<dbReference type="InterPro" id="IPR016156">
    <property type="entry name" value="FAD/NAD-linked_Rdtase_dimer_sf"/>
</dbReference>
<dbReference type="InterPro" id="IPR004099">
    <property type="entry name" value="Pyr_nucl-diS_OxRdtase_dimer"/>
</dbReference>
<dbReference type="NCBIfam" id="TIGR03385">
    <property type="entry name" value="CoA_CoA_reduc"/>
    <property type="match status" value="1"/>
</dbReference>
<dbReference type="NCBIfam" id="NF010037">
    <property type="entry name" value="PRK13512.1"/>
    <property type="match status" value="1"/>
</dbReference>
<dbReference type="PANTHER" id="PTHR43429:SF1">
    <property type="entry name" value="NAD(P)H SULFUR OXIDOREDUCTASE (COA-DEPENDENT)"/>
    <property type="match status" value="1"/>
</dbReference>
<dbReference type="PANTHER" id="PTHR43429">
    <property type="entry name" value="PYRIDINE NUCLEOTIDE-DISULFIDE OXIDOREDUCTASE DOMAIN-CONTAINING"/>
    <property type="match status" value="1"/>
</dbReference>
<dbReference type="Pfam" id="PF07992">
    <property type="entry name" value="Pyr_redox_2"/>
    <property type="match status" value="1"/>
</dbReference>
<dbReference type="Pfam" id="PF02852">
    <property type="entry name" value="Pyr_redox_dim"/>
    <property type="match status" value="1"/>
</dbReference>
<dbReference type="PRINTS" id="PR00368">
    <property type="entry name" value="FADPNR"/>
</dbReference>
<dbReference type="PRINTS" id="PR00411">
    <property type="entry name" value="PNDRDTASEI"/>
</dbReference>
<dbReference type="SUPFAM" id="SSF51905">
    <property type="entry name" value="FAD/NAD(P)-binding domain"/>
    <property type="match status" value="1"/>
</dbReference>
<dbReference type="SUPFAM" id="SSF55424">
    <property type="entry name" value="FAD/NAD-linked reductases, dimerisation (C-terminal) domain"/>
    <property type="match status" value="1"/>
</dbReference>
<name>CDR_STAA9</name>
<keyword id="KW-0274">FAD</keyword>
<keyword id="KW-0285">Flavoprotein</keyword>
<keyword id="KW-0521">NADP</keyword>
<keyword id="KW-0560">Oxidoreductase</keyword>
<keyword id="KW-0676">Redox-active center</keyword>
<reference key="1">
    <citation type="submission" date="2007-05" db="EMBL/GenBank/DDBJ databases">
        <title>Complete sequence of chromosome of Staphylococcus aureus subsp. aureus JH9.</title>
        <authorList>
            <consortium name="US DOE Joint Genome Institute"/>
            <person name="Copeland A."/>
            <person name="Lucas S."/>
            <person name="Lapidus A."/>
            <person name="Barry K."/>
            <person name="Detter J.C."/>
            <person name="Glavina del Rio T."/>
            <person name="Hammon N."/>
            <person name="Israni S."/>
            <person name="Pitluck S."/>
            <person name="Chain P."/>
            <person name="Malfatti S."/>
            <person name="Shin M."/>
            <person name="Vergez L."/>
            <person name="Schmutz J."/>
            <person name="Larimer F."/>
            <person name="Land M."/>
            <person name="Hauser L."/>
            <person name="Kyrpides N."/>
            <person name="Kim E."/>
            <person name="Tomasz A."/>
            <person name="Richardson P."/>
        </authorList>
    </citation>
    <scope>NUCLEOTIDE SEQUENCE [LARGE SCALE GENOMIC DNA]</scope>
    <source>
        <strain>JH9</strain>
    </source>
</reference>